<dbReference type="EMBL" id="AF506369">
    <property type="protein sequence ID" value="AAM28882.1"/>
    <property type="molecule type" value="mRNA"/>
</dbReference>
<dbReference type="EMBL" id="AC011000">
    <property type="protein sequence ID" value="AAF75809.1"/>
    <property type="molecule type" value="Genomic_DNA"/>
</dbReference>
<dbReference type="EMBL" id="CP002684">
    <property type="protein sequence ID" value="AEE34029.1"/>
    <property type="molecule type" value="Genomic_DNA"/>
</dbReference>
<dbReference type="EMBL" id="BT006408">
    <property type="protein sequence ID" value="AAP21216.1"/>
    <property type="molecule type" value="mRNA"/>
</dbReference>
<dbReference type="EMBL" id="AK228036">
    <property type="protein sequence ID" value="BAE99997.1"/>
    <property type="molecule type" value="mRNA"/>
</dbReference>
<dbReference type="PIR" id="F96654">
    <property type="entry name" value="F96654"/>
</dbReference>
<dbReference type="RefSeq" id="NP_683462.1">
    <property type="nucleotide sequence ID" value="NM_148621.4"/>
</dbReference>
<dbReference type="SMR" id="Q9LQ08"/>
<dbReference type="BioGRID" id="27821">
    <property type="interactions" value="9"/>
</dbReference>
<dbReference type="FunCoup" id="Q9LQ08">
    <property type="interactions" value="14"/>
</dbReference>
<dbReference type="IntAct" id="Q9LQ08">
    <property type="interactions" value="9"/>
</dbReference>
<dbReference type="STRING" id="3702.Q9LQ08"/>
<dbReference type="iPTMnet" id="Q9LQ08"/>
<dbReference type="PaxDb" id="3702-AT1G62975.1"/>
<dbReference type="EnsemblPlants" id="AT1G62975.1">
    <property type="protein sequence ID" value="AT1G62975.1"/>
    <property type="gene ID" value="AT1G62975"/>
</dbReference>
<dbReference type="GeneID" id="842600"/>
<dbReference type="Gramene" id="AT1G62975.1">
    <property type="protein sequence ID" value="AT1G62975.1"/>
    <property type="gene ID" value="AT1G62975"/>
</dbReference>
<dbReference type="KEGG" id="ath:AT1G62975"/>
<dbReference type="Araport" id="AT1G62975"/>
<dbReference type="TAIR" id="AT1G62975"/>
<dbReference type="eggNOG" id="ENOG502S1BU">
    <property type="taxonomic scope" value="Eukaryota"/>
</dbReference>
<dbReference type="HOGENOM" id="CLU_094733_0_0_1"/>
<dbReference type="InParanoid" id="Q9LQ08"/>
<dbReference type="OMA" id="MKHRAIE"/>
<dbReference type="PhylomeDB" id="Q9LQ08"/>
<dbReference type="PRO" id="PR:Q9LQ08"/>
<dbReference type="Proteomes" id="UP000006548">
    <property type="component" value="Chromosome 1"/>
</dbReference>
<dbReference type="ExpressionAtlas" id="Q9LQ08">
    <property type="expression patterns" value="baseline and differential"/>
</dbReference>
<dbReference type="GO" id="GO:0005634">
    <property type="term" value="C:nucleus"/>
    <property type="evidence" value="ECO:0007669"/>
    <property type="project" value="UniProtKB-SubCell"/>
</dbReference>
<dbReference type="GO" id="GO:0003677">
    <property type="term" value="F:DNA binding"/>
    <property type="evidence" value="ECO:0007669"/>
    <property type="project" value="UniProtKB-KW"/>
</dbReference>
<dbReference type="GO" id="GO:0003700">
    <property type="term" value="F:DNA-binding transcription factor activity"/>
    <property type="evidence" value="ECO:0000250"/>
    <property type="project" value="TAIR"/>
</dbReference>
<dbReference type="GO" id="GO:0046983">
    <property type="term" value="F:protein dimerization activity"/>
    <property type="evidence" value="ECO:0007669"/>
    <property type="project" value="InterPro"/>
</dbReference>
<dbReference type="GO" id="GO:0006357">
    <property type="term" value="P:regulation of transcription by RNA polymerase II"/>
    <property type="evidence" value="ECO:0007669"/>
    <property type="project" value="InterPro"/>
</dbReference>
<dbReference type="CDD" id="cd18914">
    <property type="entry name" value="bHLH_AtORG2_like"/>
    <property type="match status" value="1"/>
</dbReference>
<dbReference type="FunFam" id="4.10.280.10:FF:000085">
    <property type="entry name" value="Transcription factor bHLH126"/>
    <property type="match status" value="1"/>
</dbReference>
<dbReference type="Gene3D" id="4.10.280.10">
    <property type="entry name" value="Helix-loop-helix DNA-binding domain"/>
    <property type="match status" value="1"/>
</dbReference>
<dbReference type="InterPro" id="IPR011598">
    <property type="entry name" value="bHLH_dom"/>
</dbReference>
<dbReference type="InterPro" id="IPR036638">
    <property type="entry name" value="HLH_DNA-bd_sf"/>
</dbReference>
<dbReference type="InterPro" id="IPR015660">
    <property type="entry name" value="MASH1/Ascl1a-like"/>
</dbReference>
<dbReference type="PANTHER" id="PTHR13935">
    <property type="entry name" value="ACHAETE-SCUTE TRANSCRIPTION FACTOR-RELATED"/>
    <property type="match status" value="1"/>
</dbReference>
<dbReference type="PANTHER" id="PTHR13935:SF111">
    <property type="entry name" value="TRANSCRIPTION FACTOR BHLH125"/>
    <property type="match status" value="1"/>
</dbReference>
<dbReference type="Pfam" id="PF00010">
    <property type="entry name" value="HLH"/>
    <property type="match status" value="1"/>
</dbReference>
<dbReference type="SMART" id="SM00353">
    <property type="entry name" value="HLH"/>
    <property type="match status" value="1"/>
</dbReference>
<dbReference type="SUPFAM" id="SSF47459">
    <property type="entry name" value="HLH, helix-loop-helix DNA-binding domain"/>
    <property type="match status" value="1"/>
</dbReference>
<dbReference type="PROSITE" id="PS50888">
    <property type="entry name" value="BHLH"/>
    <property type="match status" value="1"/>
</dbReference>
<organism>
    <name type="scientific">Arabidopsis thaliana</name>
    <name type="common">Mouse-ear cress</name>
    <dbReference type="NCBI Taxonomy" id="3702"/>
    <lineage>
        <taxon>Eukaryota</taxon>
        <taxon>Viridiplantae</taxon>
        <taxon>Streptophyta</taxon>
        <taxon>Embryophyta</taxon>
        <taxon>Tracheophyta</taxon>
        <taxon>Spermatophyta</taxon>
        <taxon>Magnoliopsida</taxon>
        <taxon>eudicotyledons</taxon>
        <taxon>Gunneridae</taxon>
        <taxon>Pentapetalae</taxon>
        <taxon>rosids</taxon>
        <taxon>malvids</taxon>
        <taxon>Brassicales</taxon>
        <taxon>Brassicaceae</taxon>
        <taxon>Camelineae</taxon>
        <taxon>Arabidopsis</taxon>
    </lineage>
</organism>
<evidence type="ECO:0000255" key="1">
    <source>
        <dbReference type="PROSITE-ProRule" id="PRU00981"/>
    </source>
</evidence>
<evidence type="ECO:0000305" key="2"/>
<name>BH125_ARATH</name>
<gene>
    <name type="primary">BHLH125</name>
    <name type="synonym">EN2</name>
    <name type="ordered locus">At1g62975</name>
    <name type="ORF">F16P17.13</name>
</gene>
<accession>Q9LQ08</accession>
<sequence length="259" mass="29215">MDCVPSLFMPDSTYEDGLLFSDSFLLSPFISYQNNDVFHSITNKIGGSNKKRSLCDITYGANEANKNDDDRESKKMKHRDIERQRRQEVSSLFKRLRTLLPFQYIQGKRSTSDHIVQAVNYIKDLQIKIKELNEKRNRVKKVISATTTTHSAIEECTSSLSSSAASTLSSSCSCVGDKHITVVVTPCLVGVEIIISCCLGRNKSCLSSVLQMLAQEQRFSVVSCLSARRQQRFMHTIVSQVEDGKQINILELKDKIMTM</sequence>
<protein>
    <recommendedName>
        <fullName>Transcription factor bHLH125</fullName>
    </recommendedName>
    <alternativeName>
        <fullName>Basic helix-loop-helix protein 125</fullName>
        <shortName>AtbHLH125</shortName>
        <shortName>bHLH 125</shortName>
    </alternativeName>
    <alternativeName>
        <fullName>Transcription factor EN 2</fullName>
    </alternativeName>
    <alternativeName>
        <fullName>bHLH transcription factor bHLH125</fullName>
    </alternativeName>
</protein>
<keyword id="KW-0238">DNA-binding</keyword>
<keyword id="KW-0539">Nucleus</keyword>
<keyword id="KW-1185">Reference proteome</keyword>
<keyword id="KW-0804">Transcription</keyword>
<keyword id="KW-0805">Transcription regulation</keyword>
<reference key="1">
    <citation type="journal article" date="2003" name="Mol. Biol. Evol.">
        <title>The basic helix-loop-helix transcription factor family in plants: a genome-wide study of protein structure and functional diversity.</title>
        <authorList>
            <person name="Heim M.A."/>
            <person name="Jakoby M."/>
            <person name="Werber M."/>
            <person name="Martin C."/>
            <person name="Weisshaar B."/>
            <person name="Bailey P.C."/>
        </authorList>
    </citation>
    <scope>NUCLEOTIDE SEQUENCE [MRNA]</scope>
    <scope>GENE FAMILY</scope>
    <scope>NOMENCLATURE</scope>
    <source>
        <strain>cv. Columbia</strain>
    </source>
</reference>
<reference key="2">
    <citation type="journal article" date="2000" name="Nature">
        <title>Sequence and analysis of chromosome 1 of the plant Arabidopsis thaliana.</title>
        <authorList>
            <person name="Theologis A."/>
            <person name="Ecker J.R."/>
            <person name="Palm C.J."/>
            <person name="Federspiel N.A."/>
            <person name="Kaul S."/>
            <person name="White O."/>
            <person name="Alonso J."/>
            <person name="Altafi H."/>
            <person name="Araujo R."/>
            <person name="Bowman C.L."/>
            <person name="Brooks S.Y."/>
            <person name="Buehler E."/>
            <person name="Chan A."/>
            <person name="Chao Q."/>
            <person name="Chen H."/>
            <person name="Cheuk R.F."/>
            <person name="Chin C.W."/>
            <person name="Chung M.K."/>
            <person name="Conn L."/>
            <person name="Conway A.B."/>
            <person name="Conway A.R."/>
            <person name="Creasy T.H."/>
            <person name="Dewar K."/>
            <person name="Dunn P."/>
            <person name="Etgu P."/>
            <person name="Feldblyum T.V."/>
            <person name="Feng J.-D."/>
            <person name="Fong B."/>
            <person name="Fujii C.Y."/>
            <person name="Gill J.E."/>
            <person name="Goldsmith A.D."/>
            <person name="Haas B."/>
            <person name="Hansen N.F."/>
            <person name="Hughes B."/>
            <person name="Huizar L."/>
            <person name="Hunter J.L."/>
            <person name="Jenkins J."/>
            <person name="Johnson-Hopson C."/>
            <person name="Khan S."/>
            <person name="Khaykin E."/>
            <person name="Kim C.J."/>
            <person name="Koo H.L."/>
            <person name="Kremenetskaia I."/>
            <person name="Kurtz D.B."/>
            <person name="Kwan A."/>
            <person name="Lam B."/>
            <person name="Langin-Hooper S."/>
            <person name="Lee A."/>
            <person name="Lee J.M."/>
            <person name="Lenz C.A."/>
            <person name="Li J.H."/>
            <person name="Li Y.-P."/>
            <person name="Lin X."/>
            <person name="Liu S.X."/>
            <person name="Liu Z.A."/>
            <person name="Luros J.S."/>
            <person name="Maiti R."/>
            <person name="Marziali A."/>
            <person name="Militscher J."/>
            <person name="Miranda M."/>
            <person name="Nguyen M."/>
            <person name="Nierman W.C."/>
            <person name="Osborne B.I."/>
            <person name="Pai G."/>
            <person name="Peterson J."/>
            <person name="Pham P.K."/>
            <person name="Rizzo M."/>
            <person name="Rooney T."/>
            <person name="Rowley D."/>
            <person name="Sakano H."/>
            <person name="Salzberg S.L."/>
            <person name="Schwartz J.R."/>
            <person name="Shinn P."/>
            <person name="Southwick A.M."/>
            <person name="Sun H."/>
            <person name="Tallon L.J."/>
            <person name="Tambunga G."/>
            <person name="Toriumi M.J."/>
            <person name="Town C.D."/>
            <person name="Utterback T."/>
            <person name="Van Aken S."/>
            <person name="Vaysberg M."/>
            <person name="Vysotskaia V.S."/>
            <person name="Walker M."/>
            <person name="Wu D."/>
            <person name="Yu G."/>
            <person name="Fraser C.M."/>
            <person name="Venter J.C."/>
            <person name="Davis R.W."/>
        </authorList>
    </citation>
    <scope>NUCLEOTIDE SEQUENCE [LARGE SCALE GENOMIC DNA]</scope>
    <source>
        <strain>cv. Columbia</strain>
    </source>
</reference>
<reference key="3">
    <citation type="journal article" date="2017" name="Plant J.">
        <title>Araport11: a complete reannotation of the Arabidopsis thaliana reference genome.</title>
        <authorList>
            <person name="Cheng C.Y."/>
            <person name="Krishnakumar V."/>
            <person name="Chan A.P."/>
            <person name="Thibaud-Nissen F."/>
            <person name="Schobel S."/>
            <person name="Town C.D."/>
        </authorList>
    </citation>
    <scope>GENOME REANNOTATION</scope>
    <source>
        <strain>cv. Columbia</strain>
    </source>
</reference>
<reference key="4">
    <citation type="journal article" date="2003" name="Science">
        <title>Empirical analysis of transcriptional activity in the Arabidopsis genome.</title>
        <authorList>
            <person name="Yamada K."/>
            <person name="Lim J."/>
            <person name="Dale J.M."/>
            <person name="Chen H."/>
            <person name="Shinn P."/>
            <person name="Palm C.J."/>
            <person name="Southwick A.M."/>
            <person name="Wu H.C."/>
            <person name="Kim C.J."/>
            <person name="Nguyen M."/>
            <person name="Pham P.K."/>
            <person name="Cheuk R.F."/>
            <person name="Karlin-Newmann G."/>
            <person name="Liu S.X."/>
            <person name="Lam B."/>
            <person name="Sakano H."/>
            <person name="Wu T."/>
            <person name="Yu G."/>
            <person name="Miranda M."/>
            <person name="Quach H.L."/>
            <person name="Tripp M."/>
            <person name="Chang C.H."/>
            <person name="Lee J.M."/>
            <person name="Toriumi M.J."/>
            <person name="Chan M.M."/>
            <person name="Tang C.C."/>
            <person name="Onodera C.S."/>
            <person name="Deng J.M."/>
            <person name="Akiyama K."/>
            <person name="Ansari Y."/>
            <person name="Arakawa T."/>
            <person name="Banh J."/>
            <person name="Banno F."/>
            <person name="Bowser L."/>
            <person name="Brooks S.Y."/>
            <person name="Carninci P."/>
            <person name="Chao Q."/>
            <person name="Choy N."/>
            <person name="Enju A."/>
            <person name="Goldsmith A.D."/>
            <person name="Gurjal M."/>
            <person name="Hansen N.F."/>
            <person name="Hayashizaki Y."/>
            <person name="Johnson-Hopson C."/>
            <person name="Hsuan V.W."/>
            <person name="Iida K."/>
            <person name="Karnes M."/>
            <person name="Khan S."/>
            <person name="Koesema E."/>
            <person name="Ishida J."/>
            <person name="Jiang P.X."/>
            <person name="Jones T."/>
            <person name="Kawai J."/>
            <person name="Kamiya A."/>
            <person name="Meyers C."/>
            <person name="Nakajima M."/>
            <person name="Narusaka M."/>
            <person name="Seki M."/>
            <person name="Sakurai T."/>
            <person name="Satou M."/>
            <person name="Tamse R."/>
            <person name="Vaysberg M."/>
            <person name="Wallender E.K."/>
            <person name="Wong C."/>
            <person name="Yamamura Y."/>
            <person name="Yuan S."/>
            <person name="Shinozaki K."/>
            <person name="Davis R.W."/>
            <person name="Theologis A."/>
            <person name="Ecker J.R."/>
        </authorList>
    </citation>
    <scope>NUCLEOTIDE SEQUENCE [LARGE SCALE MRNA]</scope>
    <source>
        <strain>cv. Columbia</strain>
    </source>
</reference>
<reference key="5">
    <citation type="submission" date="2006-07" db="EMBL/GenBank/DDBJ databases">
        <title>Large-scale analysis of RIKEN Arabidopsis full-length (RAFL) cDNAs.</title>
        <authorList>
            <person name="Totoki Y."/>
            <person name="Seki M."/>
            <person name="Ishida J."/>
            <person name="Nakajima M."/>
            <person name="Enju A."/>
            <person name="Kamiya A."/>
            <person name="Narusaka M."/>
            <person name="Shin-i T."/>
            <person name="Nakagawa M."/>
            <person name="Sakamoto N."/>
            <person name="Oishi K."/>
            <person name="Kohara Y."/>
            <person name="Kobayashi M."/>
            <person name="Toyoda A."/>
            <person name="Sakaki Y."/>
            <person name="Sakurai T."/>
            <person name="Iida K."/>
            <person name="Akiyama K."/>
            <person name="Satou M."/>
            <person name="Toyoda T."/>
            <person name="Konagaya A."/>
            <person name="Carninci P."/>
            <person name="Kawai J."/>
            <person name="Hayashizaki Y."/>
            <person name="Shinozaki K."/>
        </authorList>
    </citation>
    <scope>NUCLEOTIDE SEQUENCE [LARGE SCALE MRNA]</scope>
    <source>
        <strain>cv. Columbia</strain>
    </source>
</reference>
<reference key="6">
    <citation type="journal article" date="2003" name="Plant Cell">
        <title>The Arabidopsis basic/helix-loop-helix transcription factor family.</title>
        <authorList>
            <person name="Toledo-Ortiz G."/>
            <person name="Huq E."/>
            <person name="Quail P.H."/>
        </authorList>
    </citation>
    <scope>GENE FAMILY</scope>
</reference>
<reference key="7">
    <citation type="journal article" date="2003" name="Plant Cell">
        <title>Update on the basic helix-loop-helix transcription factor gene family in Arabidopsis thaliana.</title>
        <authorList>
            <person name="Bailey P.C."/>
            <person name="Martin C."/>
            <person name="Toledo-Ortiz G."/>
            <person name="Quail P.H."/>
            <person name="Huq E."/>
            <person name="Heim M.A."/>
            <person name="Jakoby M."/>
            <person name="Werber M."/>
            <person name="Weisshaar B."/>
        </authorList>
    </citation>
    <scope>GENE FAMILY</scope>
    <scope>NOMENCLATURE</scope>
</reference>
<feature type="chain" id="PRO_0000358809" description="Transcription factor bHLH125">
    <location>
        <begin position="1"/>
        <end position="259"/>
    </location>
</feature>
<feature type="domain" description="bHLH" evidence="1">
    <location>
        <begin position="73"/>
        <end position="125"/>
    </location>
</feature>
<proteinExistence type="evidence at transcript level"/>
<comment type="subunit">
    <text evidence="2">Homodimer.</text>
</comment>
<comment type="subcellular location">
    <subcellularLocation>
        <location evidence="1">Nucleus</location>
    </subcellularLocation>
</comment>